<keyword id="KW-0963">Cytoplasm</keyword>
<keyword id="KW-0396">Initiation factor</keyword>
<keyword id="KW-0648">Protein biosynthesis</keyword>
<keyword id="KW-0694">RNA-binding</keyword>
<keyword id="KW-0699">rRNA-binding</keyword>
<reference key="1">
    <citation type="journal article" date="2005" name="Nucleic Acids Res.">
        <title>The genome sequence of Salmonella enterica serovar Choleraesuis, a highly invasive and resistant zoonotic pathogen.</title>
        <authorList>
            <person name="Chiu C.-H."/>
            <person name="Tang P."/>
            <person name="Chu C."/>
            <person name="Hu S."/>
            <person name="Bao Q."/>
            <person name="Yu J."/>
            <person name="Chou Y.-Y."/>
            <person name="Wang H.-S."/>
            <person name="Lee Y.-S."/>
        </authorList>
    </citation>
    <scope>NUCLEOTIDE SEQUENCE [LARGE SCALE GENOMIC DNA]</scope>
    <source>
        <strain>SC-B67</strain>
    </source>
</reference>
<sequence length="72" mass="8250">MAKEDNIEMQGTVLETLPNTMFRVELENGHVVTAHISGKMRKNYIRILTGDKVTVELTPYDLSKGRIVFRSR</sequence>
<proteinExistence type="inferred from homology"/>
<name>IF1_SALCH</name>
<gene>
    <name evidence="1" type="primary">infA</name>
    <name type="ordered locus">SCH_0907</name>
</gene>
<dbReference type="EMBL" id="AE017220">
    <property type="protein sequence ID" value="AAX64813.1"/>
    <property type="molecule type" value="Genomic_DNA"/>
</dbReference>
<dbReference type="RefSeq" id="WP_001040187.1">
    <property type="nucleotide sequence ID" value="NC_006905.1"/>
</dbReference>
<dbReference type="SMR" id="Q57R48"/>
<dbReference type="GeneID" id="93776536"/>
<dbReference type="KEGG" id="sec:SCH_0907"/>
<dbReference type="HOGENOM" id="CLU_151267_1_0_6"/>
<dbReference type="Proteomes" id="UP000000538">
    <property type="component" value="Chromosome"/>
</dbReference>
<dbReference type="GO" id="GO:0005829">
    <property type="term" value="C:cytosol"/>
    <property type="evidence" value="ECO:0007669"/>
    <property type="project" value="TreeGrafter"/>
</dbReference>
<dbReference type="GO" id="GO:0043022">
    <property type="term" value="F:ribosome binding"/>
    <property type="evidence" value="ECO:0007669"/>
    <property type="project" value="UniProtKB-UniRule"/>
</dbReference>
<dbReference type="GO" id="GO:0019843">
    <property type="term" value="F:rRNA binding"/>
    <property type="evidence" value="ECO:0007669"/>
    <property type="project" value="UniProtKB-UniRule"/>
</dbReference>
<dbReference type="GO" id="GO:0003743">
    <property type="term" value="F:translation initiation factor activity"/>
    <property type="evidence" value="ECO:0007669"/>
    <property type="project" value="UniProtKB-UniRule"/>
</dbReference>
<dbReference type="CDD" id="cd04451">
    <property type="entry name" value="S1_IF1"/>
    <property type="match status" value="1"/>
</dbReference>
<dbReference type="FunFam" id="2.40.50.140:FF:000002">
    <property type="entry name" value="Translation initiation factor IF-1"/>
    <property type="match status" value="1"/>
</dbReference>
<dbReference type="Gene3D" id="2.40.50.140">
    <property type="entry name" value="Nucleic acid-binding proteins"/>
    <property type="match status" value="1"/>
</dbReference>
<dbReference type="HAMAP" id="MF_00075">
    <property type="entry name" value="IF_1"/>
    <property type="match status" value="1"/>
</dbReference>
<dbReference type="InterPro" id="IPR012340">
    <property type="entry name" value="NA-bd_OB-fold"/>
</dbReference>
<dbReference type="InterPro" id="IPR006196">
    <property type="entry name" value="RNA-binding_domain_S1_IF1"/>
</dbReference>
<dbReference type="InterPro" id="IPR003029">
    <property type="entry name" value="S1_domain"/>
</dbReference>
<dbReference type="InterPro" id="IPR004368">
    <property type="entry name" value="TIF_IF1"/>
</dbReference>
<dbReference type="NCBIfam" id="TIGR00008">
    <property type="entry name" value="infA"/>
    <property type="match status" value="1"/>
</dbReference>
<dbReference type="PANTHER" id="PTHR33370">
    <property type="entry name" value="TRANSLATION INITIATION FACTOR IF-1, CHLOROPLASTIC"/>
    <property type="match status" value="1"/>
</dbReference>
<dbReference type="PANTHER" id="PTHR33370:SF1">
    <property type="entry name" value="TRANSLATION INITIATION FACTOR IF-1, CHLOROPLASTIC"/>
    <property type="match status" value="1"/>
</dbReference>
<dbReference type="Pfam" id="PF01176">
    <property type="entry name" value="eIF-1a"/>
    <property type="match status" value="1"/>
</dbReference>
<dbReference type="SMART" id="SM00316">
    <property type="entry name" value="S1"/>
    <property type="match status" value="1"/>
</dbReference>
<dbReference type="SUPFAM" id="SSF50249">
    <property type="entry name" value="Nucleic acid-binding proteins"/>
    <property type="match status" value="1"/>
</dbReference>
<dbReference type="PROSITE" id="PS50832">
    <property type="entry name" value="S1_IF1_TYPE"/>
    <property type="match status" value="1"/>
</dbReference>
<comment type="function">
    <text evidence="1">One of the essential components for the initiation of protein synthesis. Stabilizes the binding of IF-2 and IF-3 on the 30S subunit to which N-formylmethionyl-tRNA(fMet) subsequently binds. Helps modulate mRNA selection, yielding the 30S pre-initiation complex (PIC). Upon addition of the 50S ribosomal subunit IF-1, IF-2 and IF-3 are released leaving the mature 70S translation initiation complex.</text>
</comment>
<comment type="subunit">
    <text evidence="1">Component of the 30S ribosomal translation pre-initiation complex which assembles on the 30S ribosome in the order IF-2 and IF-3, IF-1 and N-formylmethionyl-tRNA(fMet); mRNA recruitment can occur at any time during PIC assembly.</text>
</comment>
<comment type="subcellular location">
    <subcellularLocation>
        <location evidence="1">Cytoplasm</location>
    </subcellularLocation>
</comment>
<comment type="similarity">
    <text evidence="1">Belongs to the IF-1 family.</text>
</comment>
<evidence type="ECO:0000255" key="1">
    <source>
        <dbReference type="HAMAP-Rule" id="MF_00075"/>
    </source>
</evidence>
<protein>
    <recommendedName>
        <fullName evidence="1">Translation initiation factor IF-1</fullName>
    </recommendedName>
</protein>
<feature type="chain" id="PRO_0000095857" description="Translation initiation factor IF-1">
    <location>
        <begin position="1"/>
        <end position="72"/>
    </location>
</feature>
<feature type="domain" description="S1-like" evidence="1">
    <location>
        <begin position="1"/>
        <end position="72"/>
    </location>
</feature>
<organism>
    <name type="scientific">Salmonella choleraesuis (strain SC-B67)</name>
    <dbReference type="NCBI Taxonomy" id="321314"/>
    <lineage>
        <taxon>Bacteria</taxon>
        <taxon>Pseudomonadati</taxon>
        <taxon>Pseudomonadota</taxon>
        <taxon>Gammaproteobacteria</taxon>
        <taxon>Enterobacterales</taxon>
        <taxon>Enterobacteriaceae</taxon>
        <taxon>Salmonella</taxon>
    </lineage>
</organism>
<accession>Q57R48</accession>